<organism>
    <name type="scientific">Aquifex aeolicus (strain VF5)</name>
    <dbReference type="NCBI Taxonomy" id="224324"/>
    <lineage>
        <taxon>Bacteria</taxon>
        <taxon>Pseudomonadati</taxon>
        <taxon>Aquificota</taxon>
        <taxon>Aquificia</taxon>
        <taxon>Aquificales</taxon>
        <taxon>Aquificaceae</taxon>
        <taxon>Aquifex</taxon>
    </lineage>
</organism>
<protein>
    <recommendedName>
        <fullName evidence="1">Chromosomal replication initiator protein DnaA</fullName>
    </recommendedName>
</protein>
<comment type="function">
    <text evidence="1">Plays an essential role in the initiation and regulation of chromosomal replication. ATP-DnaA binds to the origin of replication (oriC) to initiate formation of the DNA replication initiation complex once per cell cycle. Binds the DnaA box (a 9 base pair repeat at the origin) and separates the double-stranded (ds)DNA. Forms a right-handed helical filament on oriC DNA; dsDNA binds to the exterior of the filament while single-stranded (ss)DNA is stabiized in the filament's interior. The ATP-DnaA-oriC complex binds and stabilizes one strand of the AT-rich DNA unwinding element (DUE), permitting loading of DNA polymerase. After initiation quickly degrades to an ADP-DnaA complex that is not apt for DNA replication. Binds acidic phospholipids.</text>
</comment>
<comment type="function">
    <text evidence="3 4 6">Able to melt short unstable dsDNA (15-mer with melting temperature, TM, 43 degrees Celsius) in the presence of a non-hydrolyzable ATP analog; a more stable dsDNA (20-mer, TM 55 degrees Celsius) is poor substrate (PubMed:21964332). ADP does not support dsDNA melting (PubMed:21964332). Addition of DnaA-AMP-PCP (an ATP analog, beta,gamma-methyleneadenosine 5'-triphosphate) to an oric-containing plasmid causes a DNA shift to more positively supercoiled topological species, stabilizing a positive wrap and right-handed filament as seen in the crystal structure without DNA (PubMed:16829961). Filament formation generated by positive supercoiling may destabilize the origin unwinding element through compensatory negative supercoiling strain (Probable) (PubMed:16829961).</text>
</comment>
<comment type="subunit">
    <text evidence="3 4 6">In the presence of ATP analog AMP-PCP forms a linear, right-handed spiral filament with 4 subunits arranged head-to-tail, about 122 Angstroms wide and about 360 Angstroms long (PubMed:16829961, PubMed:21964332). Mg(2+)-AMP-PCP binds at the subunit interface with the gamma phosphate coordinated by adjacent subunits (PubMed:16829961, PubMed:21964332). dsDNA probably wraps on the outside of the filament (Probable) (PubMed:16829961). ssDNA binds to the center of the helical filament via the AAA+ domain, which stretches the DNA (PubMed:21964332).</text>
</comment>
<comment type="interaction">
    <interactant intactId="EBI-15590648">
        <id>O66659</id>
    </interactant>
    <interactant intactId="EBI-15590648">
        <id>O66659</id>
        <label>dnaA</label>
    </interactant>
    <organismsDiffer>false</organismsDiffer>
    <experiments>3</experiments>
</comment>
<comment type="subcellular location">
    <subcellularLocation>
        <location evidence="1">Cytoplasm</location>
    </subcellularLocation>
</comment>
<comment type="domain">
    <text evidence="1 2 3 5 6">Domain I is involved in oligomerization and binding regulators, domain II is flexibile and of varying length in different bacteria, domain III forms the AAA+ region, while domain IV binds dsDNA (By similarity). An ATP-specific conformational change within the AAA+ domain accommodates and stabilizes subunit-subunit interactions necessary to support oligomer formation (PubMed:16829961). ADP-binding does not allow oligomerization (PubMed:12234917). Probably binds dsDNA via flexible domain IV (Probable) (PubMed:12234917, PubMed:16829961).</text>
</comment>
<comment type="similarity">
    <text evidence="1">Belongs to the DnaA family.</text>
</comment>
<evidence type="ECO:0000255" key="1">
    <source>
        <dbReference type="HAMAP-Rule" id="MF_00377"/>
    </source>
</evidence>
<evidence type="ECO:0000269" key="2">
    <source>
    </source>
</evidence>
<evidence type="ECO:0000269" key="3">
    <source>
    </source>
</evidence>
<evidence type="ECO:0000269" key="4">
    <source>
    </source>
</evidence>
<evidence type="ECO:0000305" key="5">
    <source>
    </source>
</evidence>
<evidence type="ECO:0000305" key="6">
    <source>
    </source>
</evidence>
<evidence type="ECO:0007744" key="7">
    <source>
        <dbReference type="PDB" id="1L8Q"/>
    </source>
</evidence>
<evidence type="ECO:0007744" key="8">
    <source>
        <dbReference type="PDB" id="2HCB"/>
    </source>
</evidence>
<evidence type="ECO:0007744" key="9">
    <source>
        <dbReference type="PDB" id="3R8F"/>
    </source>
</evidence>
<evidence type="ECO:0007829" key="10">
    <source>
        <dbReference type="PDB" id="1L8Q"/>
    </source>
</evidence>
<gene>
    <name evidence="1" type="primary">dnaA</name>
    <name type="ordered locus">aq_322</name>
</gene>
<reference key="1">
    <citation type="journal article" date="1998" name="Nature">
        <title>The complete genome of the hyperthermophilic bacterium Aquifex aeolicus.</title>
        <authorList>
            <person name="Deckert G."/>
            <person name="Warren P.V."/>
            <person name="Gaasterland T."/>
            <person name="Young W.G."/>
            <person name="Lenox A.L."/>
            <person name="Graham D.E."/>
            <person name="Overbeek R."/>
            <person name="Snead M.A."/>
            <person name="Keller M."/>
            <person name="Aujay M."/>
            <person name="Huber R."/>
            <person name="Feldman R.A."/>
            <person name="Short J.M."/>
            <person name="Olsen G.J."/>
            <person name="Swanson R.V."/>
        </authorList>
    </citation>
    <scope>NUCLEOTIDE SEQUENCE [LARGE SCALE GENOMIC DNA]</scope>
    <source>
        <strain>VF5</strain>
    </source>
</reference>
<reference evidence="7" key="2">
    <citation type="journal article" date="2002" name="EMBO J.">
        <title>The structure of bacterial DnaA: implications for general mechanisms underlying DNA replication initiation.</title>
        <authorList>
            <person name="Erzberger J.P."/>
            <person name="Pirruccello M.M."/>
            <person name="Berger J.M."/>
        </authorList>
    </citation>
    <scope>X-RAY CRYSTALLOGRAPHY (2.7 ANGSTROMS) OF 76-399 IN COMPLEX WITH ADP AND MG(2+)</scope>
    <scope>DOMAIN</scope>
</reference>
<reference evidence="8" key="3">
    <citation type="journal article" date="2006" name="Nat. Struct. Mol. Biol.">
        <title>Structural basis for ATP-dependent DnaA assembly and replication-origin remodeling.</title>
        <authorList>
            <person name="Erzberger J.P."/>
            <person name="Mott M.L."/>
            <person name="Berger J.M."/>
        </authorList>
    </citation>
    <scope>X-RAY CRYSTALLOGRAPHY (3.51 ANGSTROMS) OF 77-399 IN COMPLEX WITH ATP ANALOG AND MG(2+)</scope>
    <scope>FUNCTION</scope>
    <scope>SUBUNIT</scope>
    <scope>DOMAIN</scope>
</reference>
<reference evidence="9" key="4">
    <citation type="journal article" date="2011" name="Nature">
        <title>DNA stretching by bacterial initiators promotes replication origin opening.</title>
        <authorList>
            <person name="Duderstadt K.E."/>
            <person name="Chuang K."/>
            <person name="Berger J.M."/>
        </authorList>
    </citation>
    <scope>X-RAY CRYSTALLOGRAPHY (3.37 ANGSTROMS) OF 76-399 IN COMPLEX WITH ATP ANALOG; SSDNA AND MG(2+)</scope>
    <scope>FUNCTION</scope>
    <scope>SUBUNIT</scope>
    <scope>SSDNA-BINDING</scope>
    <scope>MUTAGENESIS OF VAL-156; LYS-188; ARG-190; ARG-230; GLY-281 AND SER-350</scope>
</reference>
<proteinExistence type="evidence at protein level"/>
<feature type="chain" id="PRO_0000114122" description="Chromosomal replication initiator protein DnaA">
    <location>
        <begin position="1"/>
        <end position="399"/>
    </location>
</feature>
<feature type="region of interest" description="Domain I, interacts with DnaA modulators" evidence="1">
    <location>
        <begin position="1"/>
        <end position="64"/>
    </location>
</feature>
<feature type="region of interest" description="Domain II" evidence="1">
    <location>
        <begin position="64"/>
        <end position="77"/>
    </location>
</feature>
<feature type="region of interest" description="Domain III, AAA+ region" evidence="1 5 6">
    <location>
        <begin position="78"/>
        <end position="290"/>
    </location>
</feature>
<feature type="region of interest" description="Domain IV, binds dsDNA" evidence="1 5 6">
    <location>
        <begin position="291"/>
        <end position="399"/>
    </location>
</feature>
<feature type="binding site" evidence="2 7">
    <location>
        <position position="89"/>
    </location>
    <ligand>
        <name>ADP</name>
        <dbReference type="ChEBI" id="CHEBI:456216"/>
    </ligand>
</feature>
<feature type="binding site" evidence="6 8 9">
    <location>
        <position position="89"/>
    </location>
    <ligand>
        <name>ATP</name>
        <dbReference type="ChEBI" id="CHEBI:30616"/>
    </ligand>
</feature>
<feature type="binding site" evidence="2 7">
    <location>
        <position position="94"/>
    </location>
    <ligand>
        <name>ADP</name>
        <dbReference type="ChEBI" id="CHEBI:456216"/>
    </ligand>
</feature>
<feature type="binding site" evidence="2 7">
    <location>
        <position position="122"/>
    </location>
    <ligand>
        <name>ADP</name>
        <dbReference type="ChEBI" id="CHEBI:456216"/>
    </ligand>
</feature>
<feature type="binding site" evidence="1 6 8">
    <location>
        <position position="122"/>
    </location>
    <ligand>
        <name>ATP</name>
        <dbReference type="ChEBI" id="CHEBI:30616"/>
    </ligand>
</feature>
<feature type="binding site" evidence="2 7">
    <location>
        <position position="123"/>
    </location>
    <ligand>
        <name>ADP</name>
        <dbReference type="ChEBI" id="CHEBI:456216"/>
    </ligand>
</feature>
<feature type="binding site" evidence="2 7">
    <location>
        <position position="124"/>
    </location>
    <ligand>
        <name>ADP</name>
        <dbReference type="ChEBI" id="CHEBI:456216"/>
    </ligand>
</feature>
<feature type="binding site" evidence="1 6 8 9">
    <location>
        <position position="124"/>
    </location>
    <ligand>
        <name>ATP</name>
        <dbReference type="ChEBI" id="CHEBI:30616"/>
    </ligand>
</feature>
<feature type="binding site" evidence="2 7">
    <location>
        <position position="125"/>
    </location>
    <ligand>
        <name>ADP</name>
        <dbReference type="ChEBI" id="CHEBI:456216"/>
    </ligand>
</feature>
<feature type="binding site" evidence="1 6 8 9">
    <location>
        <position position="125"/>
    </location>
    <ligand>
        <name>ATP</name>
        <dbReference type="ChEBI" id="CHEBI:30616"/>
    </ligand>
</feature>
<feature type="binding site" evidence="2 7">
    <location>
        <position position="126"/>
    </location>
    <ligand>
        <name>ADP</name>
        <dbReference type="ChEBI" id="CHEBI:456216"/>
    </ligand>
</feature>
<feature type="binding site" evidence="1 6 8 9">
    <location>
        <position position="126"/>
    </location>
    <ligand>
        <name>ATP</name>
        <dbReference type="ChEBI" id="CHEBI:30616"/>
    </ligand>
</feature>
<feature type="binding site" evidence="7 8 9">
    <location>
        <position position="126"/>
    </location>
    <ligand>
        <name>Mg(2+)</name>
        <dbReference type="ChEBI" id="CHEBI:18420"/>
    </ligand>
</feature>
<feature type="binding site" evidence="2 7">
    <location>
        <position position="127"/>
    </location>
    <ligand>
        <name>ADP</name>
        <dbReference type="ChEBI" id="CHEBI:456216"/>
    </ligand>
</feature>
<feature type="binding site" evidence="6 8 9">
    <location>
        <position position="127"/>
    </location>
    <ligand>
        <name>ATP</name>
        <dbReference type="ChEBI" id="CHEBI:30616"/>
    </ligand>
</feature>
<feature type="binding site" evidence="4">
    <location>
        <position position="156"/>
    </location>
    <ligand>
        <name>ssDNA</name>
        <dbReference type="ChEBI" id="CHEBI:9160"/>
    </ligand>
</feature>
<feature type="binding site" evidence="9">
    <location>
        <position position="180"/>
    </location>
    <ligand>
        <name>ATP</name>
        <dbReference type="ChEBI" id="CHEBI:30616"/>
    </ligand>
</feature>
<feature type="binding site" evidence="8 9">
    <location>
        <position position="181"/>
    </location>
    <ligand>
        <name>Mg(2+)</name>
        <dbReference type="ChEBI" id="CHEBI:18420"/>
    </ligand>
</feature>
<feature type="binding site" evidence="4 9">
    <location>
        <position position="188"/>
    </location>
    <ligand>
        <name>ssDNA</name>
        <dbReference type="ChEBI" id="CHEBI:9160"/>
    </ligand>
</feature>
<feature type="binding site" evidence="4 9">
    <location>
        <position position="190"/>
    </location>
    <ligand>
        <name>ssDNA</name>
        <dbReference type="ChEBI" id="CHEBI:9160"/>
    </ligand>
</feature>
<feature type="binding site" evidence="4 9">
    <location>
        <position position="191"/>
    </location>
    <ligand>
        <name>ssDNA</name>
        <dbReference type="ChEBI" id="CHEBI:9160"/>
    </ligand>
</feature>
<feature type="binding site" evidence="6 8 9">
    <location>
        <position position="277"/>
    </location>
    <ligand>
        <name>ATP</name>
        <dbReference type="ChEBI" id="CHEBI:30616"/>
    </ligand>
</feature>
<feature type="mutagenesis site" description="3.6-fold decreased affinity for ssDNA, very poor unwinding of 15-mer dsDNA." evidence="4">
    <original>V</original>
    <variation>A</variation>
    <location>
        <position position="156"/>
    </location>
</feature>
<feature type="mutagenesis site" description="4.5-fold decreased affinity for ssDNA, very poor unwinding of 15-mer dsDNA." evidence="4">
    <original>K</original>
    <variation>A</variation>
    <location>
        <position position="188"/>
    </location>
</feature>
<feature type="mutagenesis site" description="8.2-fold decreased affinity for ssDNA, very poor unwinding of 15-mer dsDNA." evidence="4">
    <original>K</original>
    <variation>D</variation>
    <location>
        <position position="188"/>
    </location>
</feature>
<feature type="mutagenesis site" description="1.7-fold decreased affinity for ssDNA, very poor unwinding of 15-mer dsDNA." evidence="4">
    <original>R</original>
    <variation>A</variation>
    <location>
        <position position="190"/>
    </location>
</feature>
<feature type="mutagenesis site" description="8-fold decreased affinity for ssDNA, very poor unwinding of 15-mer dsDNA." evidence="4">
    <original>R</original>
    <variation>D</variation>
    <location>
        <position position="190"/>
    </location>
</feature>
<feature type="mutagenesis site" description="Very poor unwinding of 15-mer dsDNA." evidence="4">
    <original>R</original>
    <variation>A</variation>
    <location>
        <position position="230"/>
    </location>
</feature>
<feature type="mutagenesis site" description="Very poor unwinding of 15-mer dsDNA." evidence="4">
    <original>G</original>
    <variation>Q</variation>
    <location>
        <position position="281"/>
    </location>
</feature>
<feature type="mutagenesis site" description="Very poor unwinding of 15-mer dsDNA." evidence="4">
    <original>S</original>
    <variation>D</variation>
    <location>
        <position position="350"/>
    </location>
</feature>
<feature type="strand" evidence="10">
    <location>
        <begin position="85"/>
        <end position="87"/>
    </location>
</feature>
<feature type="turn" evidence="10">
    <location>
        <begin position="92"/>
        <end position="94"/>
    </location>
</feature>
<feature type="helix" evidence="10">
    <location>
        <begin position="95"/>
        <end position="106"/>
    </location>
</feature>
<feature type="turn" evidence="10">
    <location>
        <begin position="107"/>
        <end position="110"/>
    </location>
</feature>
<feature type="strand" evidence="10">
    <location>
        <begin position="113"/>
        <end position="118"/>
    </location>
</feature>
<feature type="strand" evidence="10">
    <location>
        <begin position="120"/>
        <end position="124"/>
    </location>
</feature>
<feature type="helix" evidence="10">
    <location>
        <begin position="125"/>
        <end position="138"/>
    </location>
</feature>
<feature type="strand" evidence="10">
    <location>
        <begin position="143"/>
        <end position="147"/>
    </location>
</feature>
<feature type="helix" evidence="10">
    <location>
        <begin position="148"/>
        <end position="161"/>
    </location>
</feature>
<feature type="helix" evidence="10">
    <location>
        <begin position="164"/>
        <end position="172"/>
    </location>
</feature>
<feature type="strand" evidence="10">
    <location>
        <begin position="175"/>
        <end position="180"/>
    </location>
</feature>
<feature type="helix" evidence="10">
    <location>
        <begin position="182"/>
        <end position="185"/>
    </location>
</feature>
<feature type="helix" evidence="10">
    <location>
        <begin position="189"/>
        <end position="204"/>
    </location>
</feature>
<feature type="strand" evidence="10">
    <location>
        <begin position="208"/>
        <end position="215"/>
    </location>
</feature>
<feature type="helix" evidence="10">
    <location>
        <begin position="217"/>
        <end position="219"/>
    </location>
</feature>
<feature type="helix" evidence="10">
    <location>
        <begin position="225"/>
        <end position="232"/>
    </location>
</feature>
<feature type="strand" evidence="10">
    <location>
        <begin position="234"/>
        <end position="238"/>
    </location>
</feature>
<feature type="helix" evidence="10">
    <location>
        <begin position="243"/>
        <end position="256"/>
    </location>
</feature>
<feature type="helix" evidence="10">
    <location>
        <begin position="263"/>
        <end position="272"/>
    </location>
</feature>
<feature type="helix" evidence="10">
    <location>
        <begin position="276"/>
        <end position="289"/>
    </location>
</feature>
<feature type="helix" evidence="10">
    <location>
        <begin position="291"/>
        <end position="316"/>
    </location>
</feature>
<feature type="helix" evidence="10">
    <location>
        <begin position="320"/>
        <end position="323"/>
    </location>
</feature>
<feature type="strand" evidence="10">
    <location>
        <begin position="330"/>
        <end position="332"/>
    </location>
</feature>
<feature type="helix" evidence="10">
    <location>
        <begin position="333"/>
        <end position="347"/>
    </location>
</feature>
<feature type="helix" evidence="10">
    <location>
        <begin position="351"/>
        <end position="357"/>
    </location>
</feature>
<feature type="helix" evidence="10">
    <location>
        <begin position="365"/>
        <end position="375"/>
    </location>
</feature>
<feature type="helix" evidence="10">
    <location>
        <begin position="383"/>
        <end position="398"/>
    </location>
</feature>
<accession>O66659</accession>
<dbReference type="EMBL" id="AE000657">
    <property type="protein sequence ID" value="AAC06612.1"/>
    <property type="molecule type" value="Genomic_DNA"/>
</dbReference>
<dbReference type="PIR" id="G70328">
    <property type="entry name" value="G70328"/>
</dbReference>
<dbReference type="RefSeq" id="NP_213219.1">
    <property type="nucleotide sequence ID" value="NC_000918.1"/>
</dbReference>
<dbReference type="RefSeq" id="WP_010880157.1">
    <property type="nucleotide sequence ID" value="NC_000918.1"/>
</dbReference>
<dbReference type="PDB" id="1L8Q">
    <property type="method" value="X-ray"/>
    <property type="resolution" value="2.70 A"/>
    <property type="chains" value="A=76-399"/>
</dbReference>
<dbReference type="PDB" id="2HCB">
    <property type="method" value="X-ray"/>
    <property type="resolution" value="3.51 A"/>
    <property type="chains" value="A/B/C/D=77-399"/>
</dbReference>
<dbReference type="PDB" id="3R8F">
    <property type="method" value="X-ray"/>
    <property type="resolution" value="3.37 A"/>
    <property type="chains" value="A/B/C/D=76-399"/>
</dbReference>
<dbReference type="PDBsum" id="1L8Q"/>
<dbReference type="PDBsum" id="2HCB"/>
<dbReference type="PDBsum" id="3R8F"/>
<dbReference type="SMR" id="O66659"/>
<dbReference type="DIP" id="DIP-29219N"/>
<dbReference type="FunCoup" id="O66659">
    <property type="interactions" value="247"/>
</dbReference>
<dbReference type="STRING" id="224324.aq_322"/>
<dbReference type="EnsemblBacteria" id="AAC06612">
    <property type="protein sequence ID" value="AAC06612"/>
    <property type="gene ID" value="aq_322"/>
</dbReference>
<dbReference type="KEGG" id="aae:aq_322"/>
<dbReference type="PATRIC" id="fig|224324.8.peg.259"/>
<dbReference type="eggNOG" id="COG0593">
    <property type="taxonomic scope" value="Bacteria"/>
</dbReference>
<dbReference type="HOGENOM" id="CLU_026910_3_2_0"/>
<dbReference type="InParanoid" id="O66659"/>
<dbReference type="OrthoDB" id="9807019at2"/>
<dbReference type="EvolutionaryTrace" id="O66659"/>
<dbReference type="Proteomes" id="UP000000798">
    <property type="component" value="Chromosome"/>
</dbReference>
<dbReference type="GO" id="GO:0005737">
    <property type="term" value="C:cytoplasm"/>
    <property type="evidence" value="ECO:0007669"/>
    <property type="project" value="UniProtKB-SubCell"/>
</dbReference>
<dbReference type="GO" id="GO:0005886">
    <property type="term" value="C:plasma membrane"/>
    <property type="evidence" value="ECO:0000318"/>
    <property type="project" value="GO_Central"/>
</dbReference>
<dbReference type="GO" id="GO:0005524">
    <property type="term" value="F:ATP binding"/>
    <property type="evidence" value="ECO:0007669"/>
    <property type="project" value="UniProtKB-UniRule"/>
</dbReference>
<dbReference type="GO" id="GO:0016887">
    <property type="term" value="F:ATP hydrolysis activity"/>
    <property type="evidence" value="ECO:0007669"/>
    <property type="project" value="InterPro"/>
</dbReference>
<dbReference type="GO" id="GO:0003688">
    <property type="term" value="F:DNA replication origin binding"/>
    <property type="evidence" value="ECO:0000318"/>
    <property type="project" value="GO_Central"/>
</dbReference>
<dbReference type="GO" id="GO:0042802">
    <property type="term" value="F:identical protein binding"/>
    <property type="evidence" value="ECO:0000353"/>
    <property type="project" value="IntAct"/>
</dbReference>
<dbReference type="GO" id="GO:0008289">
    <property type="term" value="F:lipid binding"/>
    <property type="evidence" value="ECO:0007669"/>
    <property type="project" value="UniProtKB-KW"/>
</dbReference>
<dbReference type="GO" id="GO:0006260">
    <property type="term" value="P:DNA replication"/>
    <property type="evidence" value="ECO:0000318"/>
    <property type="project" value="GO_Central"/>
</dbReference>
<dbReference type="GO" id="GO:0006270">
    <property type="term" value="P:DNA replication initiation"/>
    <property type="evidence" value="ECO:0000318"/>
    <property type="project" value="GO_Central"/>
</dbReference>
<dbReference type="GO" id="GO:0006275">
    <property type="term" value="P:regulation of DNA replication"/>
    <property type="evidence" value="ECO:0007669"/>
    <property type="project" value="UniProtKB-UniRule"/>
</dbReference>
<dbReference type="CDD" id="cd00009">
    <property type="entry name" value="AAA"/>
    <property type="match status" value="1"/>
</dbReference>
<dbReference type="CDD" id="cd06571">
    <property type="entry name" value="Bac_DnaA_C"/>
    <property type="match status" value="1"/>
</dbReference>
<dbReference type="FunFam" id="3.40.50.300:FF:000668">
    <property type="entry name" value="Chromosomal replication initiator protein DnaA"/>
    <property type="match status" value="1"/>
</dbReference>
<dbReference type="Gene3D" id="1.10.1750.10">
    <property type="match status" value="1"/>
</dbReference>
<dbReference type="Gene3D" id="1.10.8.60">
    <property type="match status" value="1"/>
</dbReference>
<dbReference type="Gene3D" id="3.40.50.300">
    <property type="entry name" value="P-loop containing nucleotide triphosphate hydrolases"/>
    <property type="match status" value="1"/>
</dbReference>
<dbReference type="HAMAP" id="MF_00377">
    <property type="entry name" value="DnaA_bact"/>
    <property type="match status" value="1"/>
</dbReference>
<dbReference type="InterPro" id="IPR003593">
    <property type="entry name" value="AAA+_ATPase"/>
</dbReference>
<dbReference type="InterPro" id="IPR001957">
    <property type="entry name" value="Chromosome_initiator_DnaA"/>
</dbReference>
<dbReference type="InterPro" id="IPR020591">
    <property type="entry name" value="Chromosome_initiator_DnaA-like"/>
</dbReference>
<dbReference type="InterPro" id="IPR018312">
    <property type="entry name" value="Chromosome_initiator_DnaA_CS"/>
</dbReference>
<dbReference type="InterPro" id="IPR013159">
    <property type="entry name" value="DnaA_C"/>
</dbReference>
<dbReference type="InterPro" id="IPR013317">
    <property type="entry name" value="DnaA_dom"/>
</dbReference>
<dbReference type="InterPro" id="IPR027417">
    <property type="entry name" value="P-loop_NTPase"/>
</dbReference>
<dbReference type="InterPro" id="IPR010921">
    <property type="entry name" value="Trp_repressor/repl_initiator"/>
</dbReference>
<dbReference type="NCBIfam" id="TIGR00362">
    <property type="entry name" value="DnaA"/>
    <property type="match status" value="1"/>
</dbReference>
<dbReference type="PANTHER" id="PTHR30050">
    <property type="entry name" value="CHROMOSOMAL REPLICATION INITIATOR PROTEIN DNAA"/>
    <property type="match status" value="1"/>
</dbReference>
<dbReference type="PANTHER" id="PTHR30050:SF2">
    <property type="entry name" value="CHROMOSOMAL REPLICATION INITIATOR PROTEIN DNAA"/>
    <property type="match status" value="1"/>
</dbReference>
<dbReference type="Pfam" id="PF00308">
    <property type="entry name" value="Bac_DnaA"/>
    <property type="match status" value="1"/>
</dbReference>
<dbReference type="Pfam" id="PF08299">
    <property type="entry name" value="Bac_DnaA_C"/>
    <property type="match status" value="1"/>
</dbReference>
<dbReference type="PRINTS" id="PR00051">
    <property type="entry name" value="DNAA"/>
</dbReference>
<dbReference type="SMART" id="SM00382">
    <property type="entry name" value="AAA"/>
    <property type="match status" value="1"/>
</dbReference>
<dbReference type="SMART" id="SM00760">
    <property type="entry name" value="Bac_DnaA_C"/>
    <property type="match status" value="1"/>
</dbReference>
<dbReference type="SUPFAM" id="SSF52540">
    <property type="entry name" value="P-loop containing nucleoside triphosphate hydrolases"/>
    <property type="match status" value="1"/>
</dbReference>
<dbReference type="SUPFAM" id="SSF48295">
    <property type="entry name" value="TrpR-like"/>
    <property type="match status" value="1"/>
</dbReference>
<dbReference type="PROSITE" id="PS01008">
    <property type="entry name" value="DNAA"/>
    <property type="match status" value="1"/>
</dbReference>
<sequence length="399" mass="46840">MELNALIKKIESVDSYAREFLKKFEIKQEKGKFLFIAPGEDYREWLETIVNTFLEEEVRKLIEVKEKEEKKKVEIKDFLNPKYTLENFIVGEGNRLAYEVVKEALENLGSLYNPIFIYGSVGTGKTHLLQAAGNEAKKRGYRVIYSSADDFAQAMVEHLKKGTINEFRNMYKSVDLLLLDDVQFLSGKERTQIEFFHIFNTLYLLEKQIILASDRHPQKLDGVSDRLVSRFEGGILVEIELDNKTRFKIIKEKLKEFNLELRKEVIDYLLENTKNVREIEGKIKLIKLKGFEGLERKERKERDKLMQIVEFVANYYAVKVEDILSDKRNKRTSEARKIAMYLCRKVCSASLIEIARAFKRKDHTTVIHAIRSVEEEKKKDRKFKHLVGFLEKQAFDKIC</sequence>
<keyword id="KW-0002">3D-structure</keyword>
<keyword id="KW-0067">ATP-binding</keyword>
<keyword id="KW-0963">Cytoplasm</keyword>
<keyword id="KW-0235">DNA replication</keyword>
<keyword id="KW-0238">DNA-binding</keyword>
<keyword id="KW-0446">Lipid-binding</keyword>
<keyword id="KW-0547">Nucleotide-binding</keyword>
<keyword id="KW-1185">Reference proteome</keyword>
<name>DNAA_AQUAE</name>